<sequence>MSSITAKLVKDLRDKTGAGMMDCKKALAETSGDISKAVEWLRQKGIASAEKKSGRVAAEGAIGSYIHTGSRVGVLIELNCETDFVARGELFQGLLRDVSMQVAACPNVEYVAVDDIPKDIVDKEKNIEMGRDDLAGKPEQIKTKIVEGRIGKRLKELALIEQPFIRDSSITVEQLVKQVAGQIGENVKVRRFTRYTLGEGIEVEESDFAAEVASMSS</sequence>
<gene>
    <name evidence="1" type="primary">tsf</name>
    <name type="ordered locus">Pro_0826</name>
</gene>
<protein>
    <recommendedName>
        <fullName evidence="1">Elongation factor Ts</fullName>
        <shortName evidence="1">EF-Ts</shortName>
    </recommendedName>
</protein>
<accession>Q7VCB5</accession>
<evidence type="ECO:0000255" key="1">
    <source>
        <dbReference type="HAMAP-Rule" id="MF_00050"/>
    </source>
</evidence>
<name>EFTS_PROMA</name>
<comment type="function">
    <text evidence="1">Associates with the EF-Tu.GDP complex and induces the exchange of GDP to GTP. It remains bound to the aminoacyl-tRNA.EF-Tu.GTP complex up to the GTP hydrolysis stage on the ribosome.</text>
</comment>
<comment type="subcellular location">
    <subcellularLocation>
        <location evidence="1">Cytoplasm</location>
    </subcellularLocation>
</comment>
<comment type="similarity">
    <text evidence="1">Belongs to the EF-Ts family.</text>
</comment>
<feature type="chain" id="PRO_0000161173" description="Elongation factor Ts">
    <location>
        <begin position="1"/>
        <end position="217"/>
    </location>
</feature>
<feature type="region of interest" description="Involved in Mg(2+) ion dislocation from EF-Tu" evidence="1">
    <location>
        <begin position="82"/>
        <end position="85"/>
    </location>
</feature>
<organism>
    <name type="scientific">Prochlorococcus marinus (strain SARG / CCMP1375 / SS120)</name>
    <dbReference type="NCBI Taxonomy" id="167539"/>
    <lineage>
        <taxon>Bacteria</taxon>
        <taxon>Bacillati</taxon>
        <taxon>Cyanobacteriota</taxon>
        <taxon>Cyanophyceae</taxon>
        <taxon>Synechococcales</taxon>
        <taxon>Prochlorococcaceae</taxon>
        <taxon>Prochlorococcus</taxon>
    </lineage>
</organism>
<reference key="1">
    <citation type="journal article" date="2003" name="Proc. Natl. Acad. Sci. U.S.A.">
        <title>Genome sequence of the cyanobacterium Prochlorococcus marinus SS120, a nearly minimal oxyphototrophic genome.</title>
        <authorList>
            <person name="Dufresne A."/>
            <person name="Salanoubat M."/>
            <person name="Partensky F."/>
            <person name="Artiguenave F."/>
            <person name="Axmann I.M."/>
            <person name="Barbe V."/>
            <person name="Duprat S."/>
            <person name="Galperin M.Y."/>
            <person name="Koonin E.V."/>
            <person name="Le Gall F."/>
            <person name="Makarova K.S."/>
            <person name="Ostrowski M."/>
            <person name="Oztas S."/>
            <person name="Robert C."/>
            <person name="Rogozin I.B."/>
            <person name="Scanlan D.J."/>
            <person name="Tandeau de Marsac N."/>
            <person name="Weissenbach J."/>
            <person name="Wincker P."/>
            <person name="Wolf Y.I."/>
            <person name="Hess W.R."/>
        </authorList>
    </citation>
    <scope>NUCLEOTIDE SEQUENCE [LARGE SCALE GENOMIC DNA]</scope>
    <source>
        <strain>SARG / CCMP1375 / SS120</strain>
    </source>
</reference>
<dbReference type="EMBL" id="AE017126">
    <property type="protein sequence ID" value="AAP99870.1"/>
    <property type="molecule type" value="Genomic_DNA"/>
</dbReference>
<dbReference type="RefSeq" id="NP_875218.1">
    <property type="nucleotide sequence ID" value="NC_005042.1"/>
</dbReference>
<dbReference type="RefSeq" id="WP_011124978.1">
    <property type="nucleotide sequence ID" value="NC_005042.1"/>
</dbReference>
<dbReference type="SMR" id="Q7VCB5"/>
<dbReference type="STRING" id="167539.Pro_0826"/>
<dbReference type="EnsemblBacteria" id="AAP99870">
    <property type="protein sequence ID" value="AAP99870"/>
    <property type="gene ID" value="Pro_0826"/>
</dbReference>
<dbReference type="KEGG" id="pma:Pro_0826"/>
<dbReference type="PATRIC" id="fig|167539.5.peg.873"/>
<dbReference type="eggNOG" id="COG0264">
    <property type="taxonomic scope" value="Bacteria"/>
</dbReference>
<dbReference type="HOGENOM" id="CLU_047155_1_1_3"/>
<dbReference type="OrthoDB" id="9808348at2"/>
<dbReference type="Proteomes" id="UP000001420">
    <property type="component" value="Chromosome"/>
</dbReference>
<dbReference type="GO" id="GO:0005737">
    <property type="term" value="C:cytoplasm"/>
    <property type="evidence" value="ECO:0007669"/>
    <property type="project" value="UniProtKB-SubCell"/>
</dbReference>
<dbReference type="GO" id="GO:0003746">
    <property type="term" value="F:translation elongation factor activity"/>
    <property type="evidence" value="ECO:0007669"/>
    <property type="project" value="UniProtKB-UniRule"/>
</dbReference>
<dbReference type="CDD" id="cd14275">
    <property type="entry name" value="UBA_EF-Ts"/>
    <property type="match status" value="1"/>
</dbReference>
<dbReference type="FunFam" id="1.10.286.20:FF:000001">
    <property type="entry name" value="Elongation factor Ts"/>
    <property type="match status" value="1"/>
</dbReference>
<dbReference type="FunFam" id="1.10.8.10:FF:000001">
    <property type="entry name" value="Elongation factor Ts"/>
    <property type="match status" value="1"/>
</dbReference>
<dbReference type="Gene3D" id="1.10.286.20">
    <property type="match status" value="1"/>
</dbReference>
<dbReference type="Gene3D" id="1.10.8.10">
    <property type="entry name" value="DNA helicase RuvA subunit, C-terminal domain"/>
    <property type="match status" value="1"/>
</dbReference>
<dbReference type="Gene3D" id="3.30.479.20">
    <property type="entry name" value="Elongation factor Ts, dimerisation domain"/>
    <property type="match status" value="1"/>
</dbReference>
<dbReference type="HAMAP" id="MF_00050">
    <property type="entry name" value="EF_Ts"/>
    <property type="match status" value="1"/>
</dbReference>
<dbReference type="InterPro" id="IPR036402">
    <property type="entry name" value="EF-Ts_dimer_sf"/>
</dbReference>
<dbReference type="InterPro" id="IPR001816">
    <property type="entry name" value="Transl_elong_EFTs/EF1B"/>
</dbReference>
<dbReference type="InterPro" id="IPR014039">
    <property type="entry name" value="Transl_elong_EFTs/EF1B_dimer"/>
</dbReference>
<dbReference type="InterPro" id="IPR018101">
    <property type="entry name" value="Transl_elong_Ts_CS"/>
</dbReference>
<dbReference type="InterPro" id="IPR009060">
    <property type="entry name" value="UBA-like_sf"/>
</dbReference>
<dbReference type="NCBIfam" id="TIGR00116">
    <property type="entry name" value="tsf"/>
    <property type="match status" value="1"/>
</dbReference>
<dbReference type="PANTHER" id="PTHR11741">
    <property type="entry name" value="ELONGATION FACTOR TS"/>
    <property type="match status" value="1"/>
</dbReference>
<dbReference type="PANTHER" id="PTHR11741:SF10">
    <property type="entry name" value="POLYPROTEIN OF EF-TS, CHLOROPLASTIC"/>
    <property type="match status" value="1"/>
</dbReference>
<dbReference type="Pfam" id="PF00889">
    <property type="entry name" value="EF_TS"/>
    <property type="match status" value="1"/>
</dbReference>
<dbReference type="SUPFAM" id="SSF54713">
    <property type="entry name" value="Elongation factor Ts (EF-Ts), dimerisation domain"/>
    <property type="match status" value="1"/>
</dbReference>
<dbReference type="SUPFAM" id="SSF46934">
    <property type="entry name" value="UBA-like"/>
    <property type="match status" value="1"/>
</dbReference>
<dbReference type="PROSITE" id="PS01126">
    <property type="entry name" value="EF_TS_1"/>
    <property type="match status" value="1"/>
</dbReference>
<dbReference type="PROSITE" id="PS01127">
    <property type="entry name" value="EF_TS_2"/>
    <property type="match status" value="1"/>
</dbReference>
<proteinExistence type="inferred from homology"/>
<keyword id="KW-0963">Cytoplasm</keyword>
<keyword id="KW-0251">Elongation factor</keyword>
<keyword id="KW-0648">Protein biosynthesis</keyword>
<keyword id="KW-1185">Reference proteome</keyword>